<feature type="chain" id="PRO_1000095605" description="Histidine--tRNA ligase">
    <location>
        <begin position="1"/>
        <end position="418"/>
    </location>
</feature>
<name>SYH_THEP3</name>
<dbReference type="EC" id="6.1.1.21" evidence="1"/>
<dbReference type="EMBL" id="CP000924">
    <property type="protein sequence ID" value="ABY94690.1"/>
    <property type="molecule type" value="Genomic_DNA"/>
</dbReference>
<dbReference type="RefSeq" id="WP_012269284.1">
    <property type="nucleotide sequence ID" value="NC_010321.1"/>
</dbReference>
<dbReference type="SMR" id="B0K977"/>
<dbReference type="STRING" id="340099.Teth39_1035"/>
<dbReference type="KEGG" id="tpd:Teth39_1035"/>
<dbReference type="eggNOG" id="COG0124">
    <property type="taxonomic scope" value="Bacteria"/>
</dbReference>
<dbReference type="HOGENOM" id="CLU_025113_1_1_9"/>
<dbReference type="Proteomes" id="UP000002156">
    <property type="component" value="Chromosome"/>
</dbReference>
<dbReference type="GO" id="GO:0005737">
    <property type="term" value="C:cytoplasm"/>
    <property type="evidence" value="ECO:0007669"/>
    <property type="project" value="UniProtKB-SubCell"/>
</dbReference>
<dbReference type="GO" id="GO:0005524">
    <property type="term" value="F:ATP binding"/>
    <property type="evidence" value="ECO:0007669"/>
    <property type="project" value="UniProtKB-UniRule"/>
</dbReference>
<dbReference type="GO" id="GO:0140096">
    <property type="term" value="F:catalytic activity, acting on a protein"/>
    <property type="evidence" value="ECO:0007669"/>
    <property type="project" value="UniProtKB-ARBA"/>
</dbReference>
<dbReference type="GO" id="GO:0004821">
    <property type="term" value="F:histidine-tRNA ligase activity"/>
    <property type="evidence" value="ECO:0007669"/>
    <property type="project" value="UniProtKB-UniRule"/>
</dbReference>
<dbReference type="GO" id="GO:0016740">
    <property type="term" value="F:transferase activity"/>
    <property type="evidence" value="ECO:0007669"/>
    <property type="project" value="UniProtKB-ARBA"/>
</dbReference>
<dbReference type="GO" id="GO:0006427">
    <property type="term" value="P:histidyl-tRNA aminoacylation"/>
    <property type="evidence" value="ECO:0007669"/>
    <property type="project" value="UniProtKB-UniRule"/>
</dbReference>
<dbReference type="CDD" id="cd00773">
    <property type="entry name" value="HisRS-like_core"/>
    <property type="match status" value="1"/>
</dbReference>
<dbReference type="CDD" id="cd00859">
    <property type="entry name" value="HisRS_anticodon"/>
    <property type="match status" value="1"/>
</dbReference>
<dbReference type="FunFam" id="3.30.930.10:FF:000005">
    <property type="entry name" value="Histidine--tRNA ligase"/>
    <property type="match status" value="1"/>
</dbReference>
<dbReference type="Gene3D" id="3.40.50.800">
    <property type="entry name" value="Anticodon-binding domain"/>
    <property type="match status" value="1"/>
</dbReference>
<dbReference type="Gene3D" id="3.30.930.10">
    <property type="entry name" value="Bira Bifunctional Protein, Domain 2"/>
    <property type="match status" value="1"/>
</dbReference>
<dbReference type="HAMAP" id="MF_00127">
    <property type="entry name" value="His_tRNA_synth"/>
    <property type="match status" value="1"/>
</dbReference>
<dbReference type="InterPro" id="IPR006195">
    <property type="entry name" value="aa-tRNA-synth_II"/>
</dbReference>
<dbReference type="InterPro" id="IPR045864">
    <property type="entry name" value="aa-tRNA-synth_II/BPL/LPL"/>
</dbReference>
<dbReference type="InterPro" id="IPR004154">
    <property type="entry name" value="Anticodon-bd"/>
</dbReference>
<dbReference type="InterPro" id="IPR036621">
    <property type="entry name" value="Anticodon-bd_dom_sf"/>
</dbReference>
<dbReference type="InterPro" id="IPR015807">
    <property type="entry name" value="His-tRNA-ligase"/>
</dbReference>
<dbReference type="InterPro" id="IPR041715">
    <property type="entry name" value="HisRS-like_core"/>
</dbReference>
<dbReference type="InterPro" id="IPR004516">
    <property type="entry name" value="HisRS/HisZ"/>
</dbReference>
<dbReference type="InterPro" id="IPR033656">
    <property type="entry name" value="HisRS_anticodon"/>
</dbReference>
<dbReference type="NCBIfam" id="TIGR00442">
    <property type="entry name" value="hisS"/>
    <property type="match status" value="1"/>
</dbReference>
<dbReference type="PANTHER" id="PTHR43707:SF1">
    <property type="entry name" value="HISTIDINE--TRNA LIGASE, MITOCHONDRIAL-RELATED"/>
    <property type="match status" value="1"/>
</dbReference>
<dbReference type="PANTHER" id="PTHR43707">
    <property type="entry name" value="HISTIDYL-TRNA SYNTHETASE"/>
    <property type="match status" value="1"/>
</dbReference>
<dbReference type="Pfam" id="PF03129">
    <property type="entry name" value="HGTP_anticodon"/>
    <property type="match status" value="1"/>
</dbReference>
<dbReference type="Pfam" id="PF13393">
    <property type="entry name" value="tRNA-synt_His"/>
    <property type="match status" value="1"/>
</dbReference>
<dbReference type="PIRSF" id="PIRSF001549">
    <property type="entry name" value="His-tRNA_synth"/>
    <property type="match status" value="1"/>
</dbReference>
<dbReference type="SUPFAM" id="SSF52954">
    <property type="entry name" value="Class II aaRS ABD-related"/>
    <property type="match status" value="1"/>
</dbReference>
<dbReference type="SUPFAM" id="SSF55681">
    <property type="entry name" value="Class II aaRS and biotin synthetases"/>
    <property type="match status" value="1"/>
</dbReference>
<dbReference type="PROSITE" id="PS50862">
    <property type="entry name" value="AA_TRNA_LIGASE_II"/>
    <property type="match status" value="1"/>
</dbReference>
<comment type="catalytic activity">
    <reaction evidence="1">
        <text>tRNA(His) + L-histidine + ATP = L-histidyl-tRNA(His) + AMP + diphosphate + H(+)</text>
        <dbReference type="Rhea" id="RHEA:17313"/>
        <dbReference type="Rhea" id="RHEA-COMP:9665"/>
        <dbReference type="Rhea" id="RHEA-COMP:9689"/>
        <dbReference type="ChEBI" id="CHEBI:15378"/>
        <dbReference type="ChEBI" id="CHEBI:30616"/>
        <dbReference type="ChEBI" id="CHEBI:33019"/>
        <dbReference type="ChEBI" id="CHEBI:57595"/>
        <dbReference type="ChEBI" id="CHEBI:78442"/>
        <dbReference type="ChEBI" id="CHEBI:78527"/>
        <dbReference type="ChEBI" id="CHEBI:456215"/>
        <dbReference type="EC" id="6.1.1.21"/>
    </reaction>
</comment>
<comment type="subunit">
    <text evidence="1">Homodimer.</text>
</comment>
<comment type="subcellular location">
    <subcellularLocation>
        <location evidence="1">Cytoplasm</location>
    </subcellularLocation>
</comment>
<comment type="similarity">
    <text evidence="1">Belongs to the class-II aminoacyl-tRNA synthetase family.</text>
</comment>
<organism>
    <name type="scientific">Thermoanaerobacter pseudethanolicus (strain ATCC 33223 / 39E)</name>
    <name type="common">Clostridium thermohydrosulfuricum</name>
    <dbReference type="NCBI Taxonomy" id="340099"/>
    <lineage>
        <taxon>Bacteria</taxon>
        <taxon>Bacillati</taxon>
        <taxon>Bacillota</taxon>
        <taxon>Clostridia</taxon>
        <taxon>Thermoanaerobacterales</taxon>
        <taxon>Thermoanaerobacteraceae</taxon>
        <taxon>Thermoanaerobacter</taxon>
    </lineage>
</organism>
<reference key="1">
    <citation type="submission" date="2008-01" db="EMBL/GenBank/DDBJ databases">
        <title>Complete sequence of Thermoanaerobacter pseudethanolicus 39E.</title>
        <authorList>
            <person name="Copeland A."/>
            <person name="Lucas S."/>
            <person name="Lapidus A."/>
            <person name="Barry K."/>
            <person name="Glavina del Rio T."/>
            <person name="Dalin E."/>
            <person name="Tice H."/>
            <person name="Pitluck S."/>
            <person name="Bruce D."/>
            <person name="Goodwin L."/>
            <person name="Saunders E."/>
            <person name="Brettin T."/>
            <person name="Detter J.C."/>
            <person name="Han C."/>
            <person name="Schmutz J."/>
            <person name="Larimer F."/>
            <person name="Land M."/>
            <person name="Hauser L."/>
            <person name="Kyrpides N."/>
            <person name="Lykidis A."/>
            <person name="Hemme C."/>
            <person name="Fields M.W."/>
            <person name="He Z."/>
            <person name="Zhou J."/>
            <person name="Richardson P."/>
        </authorList>
    </citation>
    <scope>NUCLEOTIDE SEQUENCE [LARGE SCALE GENOMIC DNA]</scope>
    <source>
        <strain>ATCC 33223 / DSM 2355 / 39E</strain>
    </source>
</reference>
<keyword id="KW-0030">Aminoacyl-tRNA synthetase</keyword>
<keyword id="KW-0067">ATP-binding</keyword>
<keyword id="KW-0963">Cytoplasm</keyword>
<keyword id="KW-0436">Ligase</keyword>
<keyword id="KW-0547">Nucleotide-binding</keyword>
<keyword id="KW-0648">Protein biosynthesis</keyword>
<keyword id="KW-1185">Reference proteome</keyword>
<protein>
    <recommendedName>
        <fullName evidence="1">Histidine--tRNA ligase</fullName>
        <ecNumber evidence="1">6.1.1.21</ecNumber>
    </recommendedName>
    <alternativeName>
        <fullName evidence="1">Histidyl-tRNA synthetase</fullName>
        <shortName evidence="1">HisRS</shortName>
    </alternativeName>
</protein>
<sequence length="418" mass="47599">MLTKAPRGTKDILPSESYKWQYIEGLIREICDVYGFKEIRTPGFEHTELFLRGVGESTDIVRKEMYTFTDKGGRSITLKPEGTSPAVRAFIEHNLYAETQPTKLYYITPVYRYERPQSGRLREHHQFGVEIFGAKSASADAEVISVAMTLLKKLGLNNLELRINSVGCPVCRKNYNKVLKEFLKNNLEYLCDDCKVRYEINPLRVLDCKVESCQRITKDAPLITDYLCDDCKSHFEELQKYLDIMGYDYIIDPRIVRGLDYYTKTAFEIISKDIGAQGTVCGGGRYDGLIEECGGPSMPGVGFGMGLERLLITLEQNGIEIPKPEGVDLFIAYVGEEAKLFTFALANKLRFNGLKVERDNMDRSLKAQMKYANKLNAKFAIVIGEEEMKENKVKLKDMRVGSEVEISIDEIEQRIKNI</sequence>
<proteinExistence type="inferred from homology"/>
<accession>B0K977</accession>
<gene>
    <name evidence="1" type="primary">hisS</name>
    <name type="ordered locus">Teth39_1035</name>
</gene>
<evidence type="ECO:0000255" key="1">
    <source>
        <dbReference type="HAMAP-Rule" id="MF_00127"/>
    </source>
</evidence>